<reference key="1">
    <citation type="submission" date="2008-05" db="EMBL/GenBank/DDBJ databases">
        <title>Complete sequence of Shigella boydii serotype 18 strain BS512.</title>
        <authorList>
            <person name="Rasko D.A."/>
            <person name="Rosovitz M."/>
            <person name="Maurelli A.T."/>
            <person name="Myers G."/>
            <person name="Seshadri R."/>
            <person name="Cer R."/>
            <person name="Jiang L."/>
            <person name="Ravel J."/>
            <person name="Sebastian Y."/>
        </authorList>
    </citation>
    <scope>NUCLEOTIDE SEQUENCE [LARGE SCALE GENOMIC DNA]</scope>
    <source>
        <strain>CDC 3083-94 / BS512</strain>
    </source>
</reference>
<gene>
    <name evidence="1" type="primary">lpxK</name>
    <name type="ordered locus">SbBS512_E2409</name>
</gene>
<name>LPXK_SHIB3</name>
<sequence length="328" mass="35593">MIEKIWSGESPLWRLLLPLSWLYGLVSGAIRLCYKLKLKRAWRAPVPVVVVGNLTAGGNGKTPVVVWLVEQLQQRGIRVGVVSRGYGSKAESYPLLLSADTTTAQAGDEPVLIYQRTDAPVAVSPVRSDAVKAILAQHPDVQIIVTDDGLQHYRLARDVEIVVIDGVRRFGNGWWLPAGPMRERAGRLKSVDAVIVNGGVPRSGEIPMHLLPGQAVNLRTGTRCDVAQLEHVVAMAGIGHPPRFFATLKMCGVQPEKCVPLADHQSLNHADVSALVSAGQTLVMTEKDAVKCRAFAEENWWYLPVDAQLSGDEPAKLLTQLTSLASGN</sequence>
<organism>
    <name type="scientific">Shigella boydii serotype 18 (strain CDC 3083-94 / BS512)</name>
    <dbReference type="NCBI Taxonomy" id="344609"/>
    <lineage>
        <taxon>Bacteria</taxon>
        <taxon>Pseudomonadati</taxon>
        <taxon>Pseudomonadota</taxon>
        <taxon>Gammaproteobacteria</taxon>
        <taxon>Enterobacterales</taxon>
        <taxon>Enterobacteriaceae</taxon>
        <taxon>Shigella</taxon>
    </lineage>
</organism>
<evidence type="ECO:0000255" key="1">
    <source>
        <dbReference type="HAMAP-Rule" id="MF_00409"/>
    </source>
</evidence>
<comment type="function">
    <text evidence="1">Transfers the gamma-phosphate of ATP to the 4'-position of a tetraacyldisaccharide 1-phosphate intermediate (termed DS-1-P) to form tetraacyldisaccharide 1,4'-bis-phosphate (lipid IVA).</text>
</comment>
<comment type="catalytic activity">
    <reaction evidence="1">
        <text>a lipid A disaccharide + ATP = a lipid IVA + ADP + H(+)</text>
        <dbReference type="Rhea" id="RHEA:67840"/>
        <dbReference type="ChEBI" id="CHEBI:15378"/>
        <dbReference type="ChEBI" id="CHEBI:30616"/>
        <dbReference type="ChEBI" id="CHEBI:176343"/>
        <dbReference type="ChEBI" id="CHEBI:176425"/>
        <dbReference type="ChEBI" id="CHEBI:456216"/>
        <dbReference type="EC" id="2.7.1.130"/>
    </reaction>
</comment>
<comment type="pathway">
    <text evidence="1">Glycolipid biosynthesis; lipid IV(A) biosynthesis; lipid IV(A) from (3R)-3-hydroxytetradecanoyl-[acyl-carrier-protein] and UDP-N-acetyl-alpha-D-glucosamine: step 6/6.</text>
</comment>
<comment type="similarity">
    <text evidence="1">Belongs to the LpxK family.</text>
</comment>
<feature type="chain" id="PRO_1000123747" description="Tetraacyldisaccharide 4'-kinase">
    <location>
        <begin position="1"/>
        <end position="328"/>
    </location>
</feature>
<feature type="binding site" evidence="1">
    <location>
        <begin position="55"/>
        <end position="62"/>
    </location>
    <ligand>
        <name>ATP</name>
        <dbReference type="ChEBI" id="CHEBI:30616"/>
    </ligand>
</feature>
<accession>B2TUG4</accession>
<protein>
    <recommendedName>
        <fullName evidence="1">Tetraacyldisaccharide 4'-kinase</fullName>
        <ecNumber evidence="1">2.7.1.130</ecNumber>
    </recommendedName>
    <alternativeName>
        <fullName evidence="1">Lipid A 4'-kinase</fullName>
    </alternativeName>
</protein>
<dbReference type="EC" id="2.7.1.130" evidence="1"/>
<dbReference type="EMBL" id="CP001063">
    <property type="protein sequence ID" value="ACD09656.1"/>
    <property type="molecule type" value="Genomic_DNA"/>
</dbReference>
<dbReference type="RefSeq" id="WP_000570560.1">
    <property type="nucleotide sequence ID" value="NC_010658.1"/>
</dbReference>
<dbReference type="SMR" id="B2TUG4"/>
<dbReference type="STRING" id="344609.SbBS512_E2409"/>
<dbReference type="KEGG" id="sbc:SbBS512_E2409"/>
<dbReference type="HOGENOM" id="CLU_038816_2_0_6"/>
<dbReference type="UniPathway" id="UPA00359">
    <property type="reaction ID" value="UER00482"/>
</dbReference>
<dbReference type="Proteomes" id="UP000001030">
    <property type="component" value="Chromosome"/>
</dbReference>
<dbReference type="GO" id="GO:0005886">
    <property type="term" value="C:plasma membrane"/>
    <property type="evidence" value="ECO:0007669"/>
    <property type="project" value="TreeGrafter"/>
</dbReference>
<dbReference type="GO" id="GO:0005524">
    <property type="term" value="F:ATP binding"/>
    <property type="evidence" value="ECO:0007669"/>
    <property type="project" value="UniProtKB-UniRule"/>
</dbReference>
<dbReference type="GO" id="GO:0009029">
    <property type="term" value="F:tetraacyldisaccharide 4'-kinase activity"/>
    <property type="evidence" value="ECO:0007669"/>
    <property type="project" value="UniProtKB-UniRule"/>
</dbReference>
<dbReference type="GO" id="GO:0009245">
    <property type="term" value="P:lipid A biosynthetic process"/>
    <property type="evidence" value="ECO:0007669"/>
    <property type="project" value="UniProtKB-UniRule"/>
</dbReference>
<dbReference type="GO" id="GO:0009244">
    <property type="term" value="P:lipopolysaccharide core region biosynthetic process"/>
    <property type="evidence" value="ECO:0007669"/>
    <property type="project" value="TreeGrafter"/>
</dbReference>
<dbReference type="HAMAP" id="MF_00409">
    <property type="entry name" value="LpxK"/>
    <property type="match status" value="1"/>
</dbReference>
<dbReference type="InterPro" id="IPR003758">
    <property type="entry name" value="LpxK"/>
</dbReference>
<dbReference type="InterPro" id="IPR027417">
    <property type="entry name" value="P-loop_NTPase"/>
</dbReference>
<dbReference type="NCBIfam" id="TIGR00682">
    <property type="entry name" value="lpxK"/>
    <property type="match status" value="1"/>
</dbReference>
<dbReference type="PANTHER" id="PTHR42724">
    <property type="entry name" value="TETRAACYLDISACCHARIDE 4'-KINASE"/>
    <property type="match status" value="1"/>
</dbReference>
<dbReference type="PANTHER" id="PTHR42724:SF1">
    <property type="entry name" value="TETRAACYLDISACCHARIDE 4'-KINASE, MITOCHONDRIAL-RELATED"/>
    <property type="match status" value="1"/>
</dbReference>
<dbReference type="Pfam" id="PF02606">
    <property type="entry name" value="LpxK"/>
    <property type="match status" value="1"/>
</dbReference>
<dbReference type="SUPFAM" id="SSF52540">
    <property type="entry name" value="P-loop containing nucleoside triphosphate hydrolases"/>
    <property type="match status" value="1"/>
</dbReference>
<proteinExistence type="inferred from homology"/>
<keyword id="KW-0067">ATP-binding</keyword>
<keyword id="KW-0418">Kinase</keyword>
<keyword id="KW-0441">Lipid A biosynthesis</keyword>
<keyword id="KW-0444">Lipid biosynthesis</keyword>
<keyword id="KW-0443">Lipid metabolism</keyword>
<keyword id="KW-0547">Nucleotide-binding</keyword>
<keyword id="KW-1185">Reference proteome</keyword>
<keyword id="KW-0808">Transferase</keyword>